<reference key="1">
    <citation type="journal article" date="1997" name="DNA Res.">
        <title>Identification of open reading frames in Schizosaccharomyces pombe cDNAs.</title>
        <authorList>
            <person name="Yoshioka S."/>
            <person name="Kato K."/>
            <person name="Nakai K."/>
            <person name="Okayama H."/>
            <person name="Nojima H."/>
        </authorList>
    </citation>
    <scope>NUCLEOTIDE SEQUENCE [LARGE SCALE MRNA]</scope>
    <source>
        <strain>PR745</strain>
    </source>
</reference>
<reference key="2">
    <citation type="journal article" date="2002" name="Nature">
        <title>The genome sequence of Schizosaccharomyces pombe.</title>
        <authorList>
            <person name="Wood V."/>
            <person name="Gwilliam R."/>
            <person name="Rajandream M.A."/>
            <person name="Lyne M.H."/>
            <person name="Lyne R."/>
            <person name="Stewart A."/>
            <person name="Sgouros J.G."/>
            <person name="Peat N."/>
            <person name="Hayles J."/>
            <person name="Baker S.G."/>
            <person name="Basham D."/>
            <person name="Bowman S."/>
            <person name="Brooks K."/>
            <person name="Brown D."/>
            <person name="Brown S."/>
            <person name="Chillingworth T."/>
            <person name="Churcher C.M."/>
            <person name="Collins M."/>
            <person name="Connor R."/>
            <person name="Cronin A."/>
            <person name="Davis P."/>
            <person name="Feltwell T."/>
            <person name="Fraser A."/>
            <person name="Gentles S."/>
            <person name="Goble A."/>
            <person name="Hamlin N."/>
            <person name="Harris D.E."/>
            <person name="Hidalgo J."/>
            <person name="Hodgson G."/>
            <person name="Holroyd S."/>
            <person name="Hornsby T."/>
            <person name="Howarth S."/>
            <person name="Huckle E.J."/>
            <person name="Hunt S."/>
            <person name="Jagels K."/>
            <person name="James K.D."/>
            <person name="Jones L."/>
            <person name="Jones M."/>
            <person name="Leather S."/>
            <person name="McDonald S."/>
            <person name="McLean J."/>
            <person name="Mooney P."/>
            <person name="Moule S."/>
            <person name="Mungall K.L."/>
            <person name="Murphy L.D."/>
            <person name="Niblett D."/>
            <person name="Odell C."/>
            <person name="Oliver K."/>
            <person name="O'Neil S."/>
            <person name="Pearson D."/>
            <person name="Quail M.A."/>
            <person name="Rabbinowitsch E."/>
            <person name="Rutherford K.M."/>
            <person name="Rutter S."/>
            <person name="Saunders D."/>
            <person name="Seeger K."/>
            <person name="Sharp S."/>
            <person name="Skelton J."/>
            <person name="Simmonds M.N."/>
            <person name="Squares R."/>
            <person name="Squares S."/>
            <person name="Stevens K."/>
            <person name="Taylor K."/>
            <person name="Taylor R.G."/>
            <person name="Tivey A."/>
            <person name="Walsh S.V."/>
            <person name="Warren T."/>
            <person name="Whitehead S."/>
            <person name="Woodward J.R."/>
            <person name="Volckaert G."/>
            <person name="Aert R."/>
            <person name="Robben J."/>
            <person name="Grymonprez B."/>
            <person name="Weltjens I."/>
            <person name="Vanstreels E."/>
            <person name="Rieger M."/>
            <person name="Schaefer M."/>
            <person name="Mueller-Auer S."/>
            <person name="Gabel C."/>
            <person name="Fuchs M."/>
            <person name="Duesterhoeft A."/>
            <person name="Fritzc C."/>
            <person name="Holzer E."/>
            <person name="Moestl D."/>
            <person name="Hilbert H."/>
            <person name="Borzym K."/>
            <person name="Langer I."/>
            <person name="Beck A."/>
            <person name="Lehrach H."/>
            <person name="Reinhardt R."/>
            <person name="Pohl T.M."/>
            <person name="Eger P."/>
            <person name="Zimmermann W."/>
            <person name="Wedler H."/>
            <person name="Wambutt R."/>
            <person name="Purnelle B."/>
            <person name="Goffeau A."/>
            <person name="Cadieu E."/>
            <person name="Dreano S."/>
            <person name="Gloux S."/>
            <person name="Lelaure V."/>
            <person name="Mottier S."/>
            <person name="Galibert F."/>
            <person name="Aves S.J."/>
            <person name="Xiang Z."/>
            <person name="Hunt C."/>
            <person name="Moore K."/>
            <person name="Hurst S.M."/>
            <person name="Lucas M."/>
            <person name="Rochet M."/>
            <person name="Gaillardin C."/>
            <person name="Tallada V.A."/>
            <person name="Garzon A."/>
            <person name="Thode G."/>
            <person name="Daga R.R."/>
            <person name="Cruzado L."/>
            <person name="Jimenez J."/>
            <person name="Sanchez M."/>
            <person name="del Rey F."/>
            <person name="Benito J."/>
            <person name="Dominguez A."/>
            <person name="Revuelta J.L."/>
            <person name="Moreno S."/>
            <person name="Armstrong J."/>
            <person name="Forsburg S.L."/>
            <person name="Cerutti L."/>
            <person name="Lowe T."/>
            <person name="McCombie W.R."/>
            <person name="Paulsen I."/>
            <person name="Potashkin J."/>
            <person name="Shpakovski G.V."/>
            <person name="Ussery D."/>
            <person name="Barrell B.G."/>
            <person name="Nurse P."/>
        </authorList>
    </citation>
    <scope>NUCLEOTIDE SEQUENCE [LARGE SCALE GENOMIC DNA]</scope>
    <source>
        <strain>972 / ATCC 24843</strain>
    </source>
</reference>
<reference key="3">
    <citation type="journal article" date="2005" name="Curr. Biol.">
        <title>Novel genes required for meiotic chromosome segregation are identified by a high-throughput knockout screen in fission yeast.</title>
        <authorList>
            <person name="Gregan J."/>
            <person name="Rabitsch P.K."/>
            <person name="Sakem B."/>
            <person name="Csutak O."/>
            <person name="Latypov V."/>
            <person name="Lehmann E."/>
            <person name="Kohli J."/>
            <person name="Nasmyth K."/>
        </authorList>
    </citation>
    <scope>FUNCTION</scope>
</reference>
<reference key="4">
    <citation type="journal article" date="2013" name="PLoS Genet.">
        <title>Global analysis of fission yeast mating genes reveals new autophagy factors.</title>
        <authorList>
            <person name="Sun L.L."/>
            <person name="Li M."/>
            <person name="Suo F."/>
            <person name="Liu X.M."/>
            <person name="Shen E.Z."/>
            <person name="Yang B."/>
            <person name="Dong M.Q."/>
            <person name="He W.Z."/>
            <person name="Du L.L."/>
        </authorList>
    </citation>
    <scope>IDENTIFICATION</scope>
    <scope>FUNCTION</scope>
    <scope>DISRUPTION PHENOTYPE</scope>
    <scope>SUBCELLULAR LOCATION</scope>
    <scope>INTERACTION WITH ATG5</scope>
</reference>
<reference key="5">
    <citation type="journal article" date="2006" name="Nat. Biotechnol.">
        <title>ORFeome cloning and global analysis of protein localization in the fission yeast Schizosaccharomyces pombe.</title>
        <authorList>
            <person name="Matsuyama A."/>
            <person name="Arai R."/>
            <person name="Yashiroda Y."/>
            <person name="Shirai A."/>
            <person name="Kamata A."/>
            <person name="Sekido S."/>
            <person name="Kobayashi Y."/>
            <person name="Hashimoto A."/>
            <person name="Hamamoto M."/>
            <person name="Hiraoka Y."/>
            <person name="Horinouchi S."/>
            <person name="Yoshida M."/>
        </authorList>
    </citation>
    <scope>SUBCELLULAR LOCATION [LARGE SCALE ANALYSIS]</scope>
</reference>
<keyword id="KW-0072">Autophagy</keyword>
<keyword id="KW-0131">Cell cycle</keyword>
<keyword id="KW-0175">Coiled coil</keyword>
<keyword id="KW-0963">Cytoplasm</keyword>
<keyword id="KW-0469">Meiosis</keyword>
<keyword id="KW-0472">Membrane</keyword>
<keyword id="KW-0653">Protein transport</keyword>
<keyword id="KW-1185">Reference proteome</keyword>
<keyword id="KW-0813">Transport</keyword>
<feature type="chain" id="PRO_0000358934" description="Autophagy protein 16">
    <location>
        <begin position="1"/>
        <end position="143"/>
    </location>
</feature>
<feature type="coiled-coil region" evidence="3">
    <location>
        <begin position="66"/>
        <end position="142"/>
    </location>
</feature>
<feature type="sequence conflict" description="In Ref. 1; BAA13916." evidence="7" ref="1">
    <original>D</original>
    <variation>E</variation>
    <location>
        <position position="9"/>
    </location>
</feature>
<feature type="sequence conflict" description="In Ref. 1; BAA13916." evidence="7" ref="1">
    <original>V</original>
    <variation>F</variation>
    <location>
        <position position="20"/>
    </location>
</feature>
<feature type="sequence conflict" description="In Ref. 1; BAA13916." evidence="7" ref="1">
    <original>F</original>
    <variation>S</variation>
    <location>
        <position position="32"/>
    </location>
</feature>
<feature type="sequence conflict" description="In Ref. 1; BAA13916." evidence="7" ref="1">
    <original>Q</original>
    <variation>P</variation>
    <location>
        <position position="44"/>
    </location>
</feature>
<feature type="sequence conflict" description="In Ref. 1; BAA13916." evidence="7" ref="1">
    <original>S</original>
    <variation>G</variation>
    <location>
        <position position="57"/>
    </location>
</feature>
<feature type="sequence conflict" description="In Ref. 1; BAA13916." evidence="7" ref="1">
    <original>E</original>
    <variation>Q</variation>
    <location>
        <position position="62"/>
    </location>
</feature>
<feature type="sequence conflict" description="In Ref. 1; BAA13916." evidence="7" ref="1">
    <original>Q</original>
    <variation>P</variation>
    <location>
        <position position="108"/>
    </location>
</feature>
<feature type="sequence conflict" description="In Ref. 1; BAA13916." evidence="7" ref="1">
    <original>K</original>
    <variation>Q</variation>
    <location>
        <position position="117"/>
    </location>
</feature>
<comment type="function">
    <text evidence="4 6">Stabilizes the atg5-atg12 conjugate and mediates the formation of the 350 kDa complex, which is necessary for autophagy. The atg5-atg12/atg16 complex is required for efficient promotion of atg8-conjugation to phosphatidylethanolamine and atg8 localization to the preautophagosomal structure (PAS). Involved in endoplasmic reticulum-specific autophagic process and is essential for the survival of cells subjected to severe ER stress. Required for meiotic chromosome segregation.</text>
</comment>
<comment type="subunit">
    <text evidence="1 6">Homodimer (By similarity). Interacts with atg5.</text>
</comment>
<comment type="subcellular location">
    <subcellularLocation>
        <location evidence="5">Cytoplasm</location>
    </subcellularLocation>
    <subcellularLocation>
        <location>Preautophagosomal structure membrane</location>
        <topology evidence="2">Peripheral membrane protein</topology>
    </subcellularLocation>
</comment>
<comment type="disruption phenotype">
    <text evidence="6">Impairs atg8-processing.</text>
</comment>
<comment type="similarity">
    <text evidence="7">Belongs to the ATG16 family.</text>
</comment>
<dbReference type="EMBL" id="D89255">
    <property type="protein sequence ID" value="BAA13916.1"/>
    <property type="molecule type" value="mRNA"/>
</dbReference>
<dbReference type="EMBL" id="CU329671">
    <property type="protein sequence ID" value="CAB38604.1"/>
    <property type="molecule type" value="Genomic_DNA"/>
</dbReference>
<dbReference type="PIR" id="T40426">
    <property type="entry name" value="T40426"/>
</dbReference>
<dbReference type="PIR" id="T43180">
    <property type="entry name" value="T43180"/>
</dbReference>
<dbReference type="RefSeq" id="NP_596308.1">
    <property type="nucleotide sequence ID" value="NM_001022230.2"/>
</dbReference>
<dbReference type="SMR" id="O94656"/>
<dbReference type="BioGRID" id="277058">
    <property type="interactions" value="11"/>
</dbReference>
<dbReference type="STRING" id="284812.O94656"/>
<dbReference type="iPTMnet" id="O94656"/>
<dbReference type="PaxDb" id="4896-SPBC405.05.1"/>
<dbReference type="EnsemblFungi" id="SPBC405.05.1">
    <property type="protein sequence ID" value="SPBC405.05.1:pep"/>
    <property type="gene ID" value="SPBC405.05"/>
</dbReference>
<dbReference type="GeneID" id="2540530"/>
<dbReference type="KEGG" id="spo:2540530"/>
<dbReference type="PomBase" id="SPBC405.05">
    <property type="gene designation" value="atg16"/>
</dbReference>
<dbReference type="VEuPathDB" id="FungiDB:SPBC405.05"/>
<dbReference type="HOGENOM" id="CLU_1807331_0_0_1"/>
<dbReference type="InParanoid" id="O94656"/>
<dbReference type="OMA" id="REAPINE"/>
<dbReference type="PRO" id="PR:O94656"/>
<dbReference type="Proteomes" id="UP000002485">
    <property type="component" value="Chromosome II"/>
</dbReference>
<dbReference type="GO" id="GO:0005737">
    <property type="term" value="C:cytoplasm"/>
    <property type="evidence" value="ECO:0007005"/>
    <property type="project" value="PomBase"/>
</dbReference>
<dbReference type="GO" id="GO:0005829">
    <property type="term" value="C:cytosol"/>
    <property type="evidence" value="ECO:0007005"/>
    <property type="project" value="PomBase"/>
</dbReference>
<dbReference type="GO" id="GO:0000407">
    <property type="term" value="C:phagophore assembly site"/>
    <property type="evidence" value="ECO:0000314"/>
    <property type="project" value="PomBase"/>
</dbReference>
<dbReference type="GO" id="GO:0034045">
    <property type="term" value="C:phagophore assembly site membrane"/>
    <property type="evidence" value="ECO:0007669"/>
    <property type="project" value="UniProtKB-SubCell"/>
</dbReference>
<dbReference type="GO" id="GO:0016236">
    <property type="term" value="P:macroautophagy"/>
    <property type="evidence" value="ECO:0000315"/>
    <property type="project" value="PomBase"/>
</dbReference>
<dbReference type="GO" id="GO:0051321">
    <property type="term" value="P:meiotic cell cycle"/>
    <property type="evidence" value="ECO:0007669"/>
    <property type="project" value="UniProtKB-KW"/>
</dbReference>
<dbReference type="GO" id="GO:0015031">
    <property type="term" value="P:protein transport"/>
    <property type="evidence" value="ECO:0007669"/>
    <property type="project" value="UniProtKB-KW"/>
</dbReference>
<gene>
    <name type="primary">atg16</name>
    <name type="ORF">SPBC405.05</name>
</gene>
<evidence type="ECO:0000250" key="1"/>
<evidence type="ECO:0000250" key="2">
    <source>
        <dbReference type="UniProtKB" id="Q03818"/>
    </source>
</evidence>
<evidence type="ECO:0000255" key="3"/>
<evidence type="ECO:0000269" key="4">
    <source>
    </source>
</evidence>
<evidence type="ECO:0000269" key="5">
    <source>
    </source>
</evidence>
<evidence type="ECO:0000269" key="6">
    <source>
    </source>
</evidence>
<evidence type="ECO:0000305" key="7"/>
<organism>
    <name type="scientific">Schizosaccharomyces pombe (strain 972 / ATCC 24843)</name>
    <name type="common">Fission yeast</name>
    <dbReference type="NCBI Taxonomy" id="284812"/>
    <lineage>
        <taxon>Eukaryota</taxon>
        <taxon>Fungi</taxon>
        <taxon>Dikarya</taxon>
        <taxon>Ascomycota</taxon>
        <taxon>Taphrinomycotina</taxon>
        <taxon>Schizosaccharomycetes</taxon>
        <taxon>Schizosaccharomycetales</taxon>
        <taxon>Schizosaccharomycetaceae</taxon>
        <taxon>Schizosaccharomyces</taxon>
    </lineage>
</organism>
<name>ATG16_SCHPO</name>
<protein>
    <recommendedName>
        <fullName>Autophagy protein 16</fullName>
    </recommendedName>
</protein>
<accession>O94656</accession>
<accession>P78904</accession>
<accession>Q1L842</accession>
<proteinExistence type="evidence at protein level"/>
<sequence>MELIKKIQDRDAAEKAYYDVIEPYSELLEFSFHKEFVSEEKVTQRTASSDSLNTIASENNDENVINLEEFRQLKRNCDLYQRNLQKLQLLFKQQSQKNTLLEKQLSLQTELNQEKDKRVKILQDELWALQLEVAALERKSPNA</sequence>